<reference key="1">
    <citation type="journal article" date="2003" name="Mol. Immunol.">
        <title>Molecular cloning and immunological characterisation of potential allergens from the mould Fusarium culmorum.</title>
        <authorList>
            <person name="Hoff M."/>
            <person name="Ballmer-Weber B.K."/>
            <person name="Niggemann B."/>
            <person name="Cistero-Bahima A."/>
            <person name="San Miguel-Moncin M."/>
            <person name="Conti A."/>
            <person name="Haustein D."/>
            <person name="Vieths S."/>
        </authorList>
    </citation>
    <scope>NUCLEOTIDE SEQUENCE [MRNA]</scope>
    <scope>ALLERGEN</scope>
</reference>
<proteinExistence type="evidence at protein level"/>
<protein>
    <recommendedName>
        <fullName>Allergen Fus c 3</fullName>
    </recommendedName>
    <allergenName>Fus c 3</allergenName>
</protein>
<sequence length="450" mass="48938">MAGDHAGDQSFYDFLIEEPEMIAPTPPGQFPHQQPISSPNRTSRNTPLRPESTEIETHHHANHPPALPVLGMQLPVPGTVPESSRAQSRASLNLDIDLDLHAPSHPSHLSHGAPHEQEHAHEIQRHRAHSAQSSAGLPPTGFASHLPPASSGPVSLGWNMYHVPPNLHLNANQFNFEVPGHMNVSGHPTHLEHSSTNPNSFHYEHNIVSPSSIHPSTAHFDGEVPSQWDDSLGHGASTPKVRTPSHHVSSNPWAEINEPTGGDNDNLAPVTRPRKPARARRQKKEPRKLSDASQGARSSSTGGTAHSVSDAASPSSTSHQSRASLTSKSASMTSAASTASSRKSKLRSASRTSKNTLDKPNDTAEDRRTRASHNLVEKQYRNRLNAQFESLLHALPEQIRHGDNGGGNGNVDNESEQANDLDRRVSKGEVLEMARRHIEALERERNQLGT</sequence>
<comment type="allergen">
    <text evidence="3">Causes an allergic reaction in human. Binds to IgE.</text>
</comment>
<keyword id="KW-0020">Allergen</keyword>
<keyword id="KW-0238">DNA-binding</keyword>
<feature type="chain" id="PRO_0000127182" description="Allergen Fus c 3">
    <location>
        <begin position="1"/>
        <end position="450"/>
    </location>
</feature>
<feature type="domain" description="bHLH" evidence="1">
    <location>
        <begin position="368"/>
        <end position="441"/>
    </location>
</feature>
<feature type="region of interest" description="Disordered" evidence="2">
    <location>
        <begin position="18"/>
        <end position="87"/>
    </location>
</feature>
<feature type="region of interest" description="Disordered" evidence="2">
    <location>
        <begin position="99"/>
        <end position="148"/>
    </location>
</feature>
<feature type="region of interest" description="Disordered" evidence="2">
    <location>
        <begin position="185"/>
        <end position="377"/>
    </location>
</feature>
<feature type="region of interest" description="Disordered" evidence="2">
    <location>
        <begin position="398"/>
        <end position="426"/>
    </location>
</feature>
<feature type="compositionally biased region" description="Polar residues" evidence="2">
    <location>
        <begin position="31"/>
        <end position="46"/>
    </location>
</feature>
<feature type="compositionally biased region" description="Low complexity" evidence="2">
    <location>
        <begin position="101"/>
        <end position="112"/>
    </location>
</feature>
<feature type="compositionally biased region" description="Basic and acidic residues" evidence="2">
    <location>
        <begin position="113"/>
        <end position="125"/>
    </location>
</feature>
<feature type="compositionally biased region" description="Basic residues" evidence="2">
    <location>
        <begin position="272"/>
        <end position="286"/>
    </location>
</feature>
<feature type="compositionally biased region" description="Polar residues" evidence="2">
    <location>
        <begin position="291"/>
        <end position="304"/>
    </location>
</feature>
<feature type="compositionally biased region" description="Low complexity" evidence="2">
    <location>
        <begin position="305"/>
        <end position="341"/>
    </location>
</feature>
<feature type="compositionally biased region" description="Basic and acidic residues" evidence="2">
    <location>
        <begin position="356"/>
        <end position="377"/>
    </location>
</feature>
<organism>
    <name type="scientific">Fusarium culmorum</name>
    <dbReference type="NCBI Taxonomy" id="5516"/>
    <lineage>
        <taxon>Eukaryota</taxon>
        <taxon>Fungi</taxon>
        <taxon>Dikarya</taxon>
        <taxon>Ascomycota</taxon>
        <taxon>Pezizomycotina</taxon>
        <taxon>Sordariomycetes</taxon>
        <taxon>Hypocreomycetidae</taxon>
        <taxon>Hypocreales</taxon>
        <taxon>Nectriaceae</taxon>
        <taxon>Fusarium</taxon>
    </lineage>
</organism>
<name>FUSC3_FUSCU</name>
<evidence type="ECO:0000255" key="1">
    <source>
        <dbReference type="PROSITE-ProRule" id="PRU00981"/>
    </source>
</evidence>
<evidence type="ECO:0000256" key="2">
    <source>
        <dbReference type="SAM" id="MobiDB-lite"/>
    </source>
</evidence>
<evidence type="ECO:0000269" key="3">
    <source>
    </source>
</evidence>
<accession>Q8J1X7</accession>
<dbReference type="EMBL" id="AY167564">
    <property type="protein sequence ID" value="AAN73248.1"/>
    <property type="molecule type" value="mRNA"/>
</dbReference>
<dbReference type="SMR" id="Q8J1X7"/>
<dbReference type="Allergome" id="1023">
    <property type="allergen name" value="Fus c 3"/>
</dbReference>
<dbReference type="GO" id="GO:0003677">
    <property type="term" value="F:DNA binding"/>
    <property type="evidence" value="ECO:0007669"/>
    <property type="project" value="UniProtKB-KW"/>
</dbReference>
<dbReference type="GO" id="GO:0046983">
    <property type="term" value="F:protein dimerization activity"/>
    <property type="evidence" value="ECO:0007669"/>
    <property type="project" value="InterPro"/>
</dbReference>
<dbReference type="Gene3D" id="4.10.280.10">
    <property type="entry name" value="Helix-loop-helix DNA-binding domain"/>
    <property type="match status" value="1"/>
</dbReference>
<dbReference type="InterPro" id="IPR011598">
    <property type="entry name" value="bHLH_dom"/>
</dbReference>
<dbReference type="InterPro" id="IPR036638">
    <property type="entry name" value="HLH_DNA-bd_sf"/>
</dbReference>
<dbReference type="InterPro" id="IPR052099">
    <property type="entry name" value="Regulatory_TF_Diverse"/>
</dbReference>
<dbReference type="PANTHER" id="PTHR47336">
    <property type="entry name" value="TRANSCRIPTION FACTOR HMS1-RELATED"/>
    <property type="match status" value="1"/>
</dbReference>
<dbReference type="PANTHER" id="PTHR47336:SF2">
    <property type="entry name" value="TRANSCRIPTION FACTOR HMS1-RELATED"/>
    <property type="match status" value="1"/>
</dbReference>
<dbReference type="Pfam" id="PF00010">
    <property type="entry name" value="HLH"/>
    <property type="match status" value="1"/>
</dbReference>
<dbReference type="SMART" id="SM00353">
    <property type="entry name" value="HLH"/>
    <property type="match status" value="1"/>
</dbReference>
<dbReference type="SUPFAM" id="SSF47459">
    <property type="entry name" value="HLH, helix-loop-helix DNA-binding domain"/>
    <property type="match status" value="1"/>
</dbReference>
<dbReference type="PROSITE" id="PS50888">
    <property type="entry name" value="BHLH"/>
    <property type="match status" value="1"/>
</dbReference>